<name>REDM_ECOLX</name>
<keyword id="KW-0229">DNA integration</keyword>
<keyword id="KW-0233">DNA recombination</keyword>
<keyword id="KW-0614">Plasmid</keyword>
<keyword id="KW-0678">Repressor</keyword>
<keyword id="KW-0804">Transcription</keyword>
<keyword id="KW-0805">Transcription regulation</keyword>
<proteinExistence type="inferred from homology"/>
<evidence type="ECO:0000255" key="1">
    <source>
        <dbReference type="PROSITE-ProRule" id="PRU01246"/>
    </source>
</evidence>
<evidence type="ECO:0000305" key="2"/>
<comment type="function">
    <text>This resolvase acts at the RfsF equivalent resolution sequence of pColBM-CL139.</text>
</comment>
<comment type="similarity">
    <text evidence="2">Belongs to the 'phage' integrase family.</text>
</comment>
<organism>
    <name type="scientific">Escherichia coli</name>
    <dbReference type="NCBI Taxonomy" id="562"/>
    <lineage>
        <taxon>Bacteria</taxon>
        <taxon>Pseudomonadati</taxon>
        <taxon>Pseudomonadota</taxon>
        <taxon>Gammaproteobacteria</taxon>
        <taxon>Enterobacterales</taxon>
        <taxon>Enterobacteriaceae</taxon>
        <taxon>Escherichia</taxon>
    </lineage>
</organism>
<geneLocation type="plasmid">
    <name>ColBM-Cl139</name>
</geneLocation>
<sequence length="260" mass="29177">MQHLPAPIHHARDAVQLPVAIDYPAALALRQMSMVHDELPKYLLAPEVSALLHYVPDLRRKMLLATLWNTGARINEALALTRGDFSLTPPYPFVQLATLKQRTEKAARTAGRMPAGQQTHRLVPLSDSWYVSQLQTMVATLKIPMERRNKRTGRTEKARIWEVTDRTVRTWIGEAVAAAAADGVTFSVPVTPHTFRHSYAMHMLYAGIPLKVLQSLMGHKSISSTEVYTKVFALDVAARHRVQFSMPESDAVTMLKNRHA</sequence>
<dbReference type="EMBL" id="J03312">
    <property type="protein sequence ID" value="AAA24255.1"/>
    <property type="molecule type" value="Genomic_DNA"/>
</dbReference>
<dbReference type="EMBL" id="M35683">
    <property type="protein sequence ID" value="AAA23010.1"/>
    <property type="molecule type" value="Genomic_DNA"/>
</dbReference>
<dbReference type="PIR" id="JT0371">
    <property type="entry name" value="JT0371"/>
</dbReference>
<dbReference type="RefSeq" id="WP_016237148.1">
    <property type="nucleotide sequence ID" value="NZ_CAJSLR010000055.1"/>
</dbReference>
<dbReference type="SMR" id="P18021"/>
<dbReference type="PATRIC" id="fig|562.7815.peg.4102"/>
<dbReference type="GO" id="GO:0003677">
    <property type="term" value="F:DNA binding"/>
    <property type="evidence" value="ECO:0007669"/>
    <property type="project" value="InterPro"/>
</dbReference>
<dbReference type="GO" id="GO:0015074">
    <property type="term" value="P:DNA integration"/>
    <property type="evidence" value="ECO:0007669"/>
    <property type="project" value="UniProtKB-KW"/>
</dbReference>
<dbReference type="GO" id="GO:0006310">
    <property type="term" value="P:DNA recombination"/>
    <property type="evidence" value="ECO:0007669"/>
    <property type="project" value="UniProtKB-KW"/>
</dbReference>
<dbReference type="Gene3D" id="1.10.443.10">
    <property type="entry name" value="Intergrase catalytic core"/>
    <property type="match status" value="1"/>
</dbReference>
<dbReference type="InterPro" id="IPR011010">
    <property type="entry name" value="DNA_brk_join_enz"/>
</dbReference>
<dbReference type="InterPro" id="IPR013762">
    <property type="entry name" value="Integrase-like_cat_sf"/>
</dbReference>
<dbReference type="InterPro" id="IPR002104">
    <property type="entry name" value="Integrase_catalytic"/>
</dbReference>
<dbReference type="InterPro" id="IPR016423">
    <property type="entry name" value="Resolvase_Rsv"/>
</dbReference>
<dbReference type="InterPro" id="IPR050090">
    <property type="entry name" value="Tyrosine_recombinase_XerCD"/>
</dbReference>
<dbReference type="PANTHER" id="PTHR30349">
    <property type="entry name" value="PHAGE INTEGRASE-RELATED"/>
    <property type="match status" value="1"/>
</dbReference>
<dbReference type="PANTHER" id="PTHR30349:SF90">
    <property type="entry name" value="TYROSINE RECOMBINASE XERD"/>
    <property type="match status" value="1"/>
</dbReference>
<dbReference type="Pfam" id="PF00589">
    <property type="entry name" value="Phage_integrase"/>
    <property type="match status" value="1"/>
</dbReference>
<dbReference type="PIRSF" id="PIRSF004576">
    <property type="entry name" value="Resolvase_Rsv"/>
    <property type="match status" value="1"/>
</dbReference>
<dbReference type="SUPFAM" id="SSF56349">
    <property type="entry name" value="DNA breaking-rejoining enzymes"/>
    <property type="match status" value="1"/>
</dbReference>
<dbReference type="PROSITE" id="PS51898">
    <property type="entry name" value="TYR_RECOMBINASE"/>
    <property type="match status" value="1"/>
</dbReference>
<accession>P18021</accession>
<reference key="1">
    <citation type="journal article" date="1988" name="Plasmid">
        <title>Plasmid pColBM-Cl139 does not encode a colicin lysis protein but contains sequences highly homologous to the D protein (resolvase) and the oriV region of the miniF plasmid.</title>
        <authorList>
            <person name="Thumm G."/>
            <person name="Oelschlaeger T."/>
            <person name="Braun V."/>
        </authorList>
    </citation>
    <scope>NUCLEOTIDE SEQUENCE [GENOMIC DNA]</scope>
</reference>
<gene>
    <name type="primary">resD</name>
    <name type="synonym">D</name>
</gene>
<protein>
    <recommendedName>
        <fullName>Resolvase</fullName>
    </recommendedName>
    <alternativeName>
        <fullName>Protein D</fullName>
    </alternativeName>
</protein>
<feature type="chain" id="PRO_0000197548" description="Resolvase">
    <location>
        <begin position="1"/>
        <end position="260"/>
    </location>
</feature>
<feature type="domain" description="Tyr recombinase" evidence="1">
    <location>
        <begin position="38"/>
        <end position="241"/>
    </location>
</feature>
<feature type="active site" evidence="1">
    <location>
        <position position="73"/>
    </location>
</feature>
<feature type="active site" evidence="1">
    <location>
        <position position="105"/>
    </location>
</feature>
<feature type="active site" evidence="1">
    <location>
        <position position="193"/>
    </location>
</feature>
<feature type="active site" evidence="1">
    <location>
        <position position="196"/>
    </location>
</feature>
<feature type="active site" evidence="1">
    <location>
        <position position="219"/>
    </location>
</feature>
<feature type="active site" description="O-(3'-phospho-DNA)-tyrosine intermediate" evidence="1">
    <location>
        <position position="228"/>
    </location>
</feature>